<accession>A0A455ZJD4</accession>
<sequence length="2799" mass="309643">MISETFCKSSADEGYTSFPIRPTSIDRPVLDKTSQCEFALFPHFCNIHTLSTLSNASWALIAGQLTNSTKIILGVPSSGESTPVHDIESRTALQPAAVPLLIDWRPEQSVADYLNHVQSRIADATALDGASSQLLAGGFPGDNYARHIQTLIVVETIETSPGSINGTQKLQRLEYDHKKNSACATLVIEMRLQKTGIMADASFDTRALGPWLVYNLLKRLEYVMKQLCCVSSGHVLADIDMITPEDLEQIWQCNDPIPAPVERCMHDVVQERCRLQPNALAVDAWDGRLTYRELDQLSDRLAGRLVNQGIEPDMLVPLCFHKSMWMPVTMMGVLKAGGGFVLLEPSFPEQRLRAMVEEIKPSIILASSTTRALSLRLLDNVIQVDSELFNYPNPSANGFPQLQPSSTAMFGVFTSGSTGKPKGAILTHANYCSAFTYQLDLLGFKKDSRVFDFASYAFDVSVHNVFASLASGACLCIASEEERRQDICKSISDMRATIVHLTPSVTRLIQPEKVPLLQTVIFTGEPLSVEDVKPWWGKVNIVNEYGPAECTINTINSNPSSPEEATMIGKGVGVAVWIVDPNDHDLLAPIGSVGELLIEGALVGRGYINETERNAAAFIENPKWLLHGRPGRPGRQGRLYKTGDLVKYGEDGNLIFVGRKDTQVKIYGQRVDLREVEHWIQSCGHGAGQVVAEMIAPRADDPAPALVAFLQIGHTGLGGPLCPNSTEATLRPVPDEVEAKLAKHLPSYMVPKMFIAMSQFPMTATGKTDRRQLRKIGSSFSLEQLAEVRAKARGRLERQPLTGMERLLCDVWSKVLRLERRTIGPESNFFHLGGDSIAAMKSVGEARKSGIKVAVADVFRHPSLQDLSRQSRYIEDNSLDHIEPFDLLGEVFNRVSFLKDASHQYGIDPSAIYDAYPCTPLQEGLMSLTAKRPGDYIEQMILELGGDVEVDNLWVAWDHVARVTPILRTRLVHHNDLGLVQLVLEENTSRTDATGLDEYLDADRRRSMSLGEPLSRYGLVRNETGEPKWFVWSIHHAIYDGWSVQLILDAAYRAYRGEKIQQGPQFQVFIKYVQQQRHHNQGRVVEYWQKTLAGFKGTQFPSVVPSVQQPVADTSLCCCIPNPQNSRVGVTTSMLIRAAWALVVGTMANSEDVVFGSTLYGRNASVAGLEELAAPTIATVPVRVRFSRNQTVSEYLEAIQQEATAMIPFEQTGLQEIAQISDSCQMACQFQTHLVIQPEEHAQGKGPLGTWQIRSQEQWFSTYSLTLELWLGTDHITASAMFDSRIIESWVVRSMLQRLEGVMYQLNYATSSQLLGDITILTTEDLEQIWEWNKTIPTPVNRCVHEIIHDKVQARPNAPAICAWDGELTYNELNRLADQLSGRLTELGVGPHLLVPLCFEKSLWTAVAILGVIKSGGGFVLLDASLPEQRLRSIMQQVKGDLVITCPSQQALCSRLGAQTITLSWGFFSTLRGYEAGLRIQEYSPSSILYAVFTSGSTGTPKGVLITHGNMASALHYQSEAMGLSEDSRLYDFASYSFDVAISNIFTVLAAGGCLCVPSEEHRKNNLEGSIISLRANALDLTPSIAQLLSSARLLNVRSLTLGGESVLATAAEPWFGKLQMRNAYGPSECTPTCIINHNPSSPEQATEIGNGVGVVTWVVDPSNHEVLLPPGCTGELLLEGPLVGPGYLGDGEKTAAAFIHDPVWLTKGTHNRTGRHGRLYKTGDLVKYNKNGTLSFVRRKDTQIKLRGQRVELGEVEHVLRSHSCVVDAVAVSQRDDKLGAWIAGFVTIRADGQKKHQGDGEYEQQQIQSWEDQFDGETYTSIEAMPREAIGRDFIGWTSMYDGSDIDKGDMNEWLDDTINTILDGGPVGHVLEIGCGSGMMLFNLANKGLQSYIGIEPSRRAVDATTRIANSIPNLKERIRIVKGTGEDLQRLGTRLGTPISPDLVVINSVIQYFPSQEYLVKLIQDIFKLGSVKTIFFGDVRSHALHKEFLALRALQILGETASREEIGQVLSNLHRAEPELLLDPEFFTSLPARLPGHIAHVEILPKKMEATNELSSFRYGAVVHLDLEHRQTPDIDPKSWVSYTSRGLDCKSLLALLKNRPEAADTIAICDIPHSKTVFATELIDDLENGASEARHSRHWAQFICQKAKQRSSLSAIDLVKLAEEAGYRVEISWARQYSQRGGLDAVFHRCIADNDARRVLFRFPTDHTDRPYHFLSSKPLRRQAEIKIQKELEAKLRCQLPSHMIPQTITILDRMPANHNGKVDRQILADSVQRQWTGRGRRRSPTTDMEKELQRIWSHVLNISPDSIGLDDGFVHLGGNSLNAMKIVHMARQAGIDLTVADMFRYSETTIERLLLDCCCDDTCGKGTSADAVNWTYLMAAIDERDAYLAAIQAGEKSHLVNGDMQADSDNLLTVLLTGANGFIGTQILRQLLEHGRVDRVICIVRGESPSVARQRTIEAAKKALWWTEFHQEMLEVWPGDLSLPRLGLDEVKWRLLAEGKAANIIIHNGASVNFVKSYAALEAANVDSTVEMVSVVTRNPSMRLIYVSSARSQDPMEEEEEDMAQALTKNPNGYNQTKFIAEALVRRAALRTSPRQDQFMVVSPGLVVGTPTEGVANADDWLWRMAAACIRVGVYNVDNSDKWVPLCDVSTTATVIIEAALGHPSTSRTVTQVRGGLTMGEFWETLAAAGYPLVGTRVAECTAAIQEDILANGENHPLGALADMLQDLEDTTNVQWADSWRKNGLCSPARLKAALCKSAEFLSRVEFLPSPNLVHGRVVQETNMRAFTRSGF</sequence>
<name>PERA_METMF</name>
<protein>
    <recommendedName>
        <fullName evidence="7">Peramine synthetase ppzA</fullName>
        <ecNumber evidence="2">2.3.2.-</ecNumber>
    </recommendedName>
    <alternativeName>
        <fullName evidence="7">Nonribosomal peptide synthetase ppzA</fullName>
        <shortName evidence="7">NRPS ppzA</shortName>
    </alternativeName>
    <alternativeName>
        <fullName evidence="7">Pyrrolopyrazine biosynthesis cluster protein A</fullName>
    </alternativeName>
</protein>
<proteinExistence type="inferred from homology"/>
<dbReference type="EC" id="2.3.2.-" evidence="2"/>
<dbReference type="EMBL" id="BK010672">
    <property type="protein sequence ID" value="DAC76720.1"/>
    <property type="molecule type" value="Genomic_DNA"/>
</dbReference>
<dbReference type="GO" id="GO:0005737">
    <property type="term" value="C:cytoplasm"/>
    <property type="evidence" value="ECO:0007669"/>
    <property type="project" value="TreeGrafter"/>
</dbReference>
<dbReference type="GO" id="GO:0016874">
    <property type="term" value="F:ligase activity"/>
    <property type="evidence" value="ECO:0007669"/>
    <property type="project" value="UniProtKB-KW"/>
</dbReference>
<dbReference type="GO" id="GO:0008168">
    <property type="term" value="F:methyltransferase activity"/>
    <property type="evidence" value="ECO:0007669"/>
    <property type="project" value="UniProtKB-KW"/>
</dbReference>
<dbReference type="GO" id="GO:0031177">
    <property type="term" value="F:phosphopantetheine binding"/>
    <property type="evidence" value="ECO:0007669"/>
    <property type="project" value="InterPro"/>
</dbReference>
<dbReference type="GO" id="GO:0043041">
    <property type="term" value="P:amino acid activation for nonribosomal peptide biosynthetic process"/>
    <property type="evidence" value="ECO:0007669"/>
    <property type="project" value="TreeGrafter"/>
</dbReference>
<dbReference type="GO" id="GO:0032259">
    <property type="term" value="P:methylation"/>
    <property type="evidence" value="ECO:0007669"/>
    <property type="project" value="UniProtKB-KW"/>
</dbReference>
<dbReference type="GO" id="GO:0009403">
    <property type="term" value="P:toxin biosynthetic process"/>
    <property type="evidence" value="ECO:0007669"/>
    <property type="project" value="UniProtKB-ARBA"/>
</dbReference>
<dbReference type="CDD" id="cd05918">
    <property type="entry name" value="A_NRPS_SidN3_like"/>
    <property type="match status" value="2"/>
</dbReference>
<dbReference type="CDD" id="cd02440">
    <property type="entry name" value="AdoMet_MTases"/>
    <property type="match status" value="1"/>
</dbReference>
<dbReference type="CDD" id="cd19545">
    <property type="entry name" value="FUM14_C_NRPS-like"/>
    <property type="match status" value="1"/>
</dbReference>
<dbReference type="FunFam" id="3.30.300.30:FF:000015">
    <property type="entry name" value="Nonribosomal peptide synthase SidD"/>
    <property type="match status" value="1"/>
</dbReference>
<dbReference type="FunFam" id="3.30.559.30:FF:000003">
    <property type="entry name" value="Nonribosomal peptide synthase SidD"/>
    <property type="match status" value="1"/>
</dbReference>
<dbReference type="FunFam" id="1.10.1200.10:FF:000005">
    <property type="entry name" value="Nonribosomal peptide synthetase 1"/>
    <property type="match status" value="2"/>
</dbReference>
<dbReference type="FunFam" id="3.40.50.12780:FF:000014">
    <property type="entry name" value="Nonribosomal peptide synthetase 1"/>
    <property type="match status" value="2"/>
</dbReference>
<dbReference type="Gene3D" id="3.30.300.30">
    <property type="match status" value="3"/>
</dbReference>
<dbReference type="Gene3D" id="1.10.1200.10">
    <property type="entry name" value="ACP-like"/>
    <property type="match status" value="2"/>
</dbReference>
<dbReference type="Gene3D" id="3.30.559.10">
    <property type="entry name" value="Chloramphenicol acetyltransferase-like domain"/>
    <property type="match status" value="1"/>
</dbReference>
<dbReference type="Gene3D" id="3.40.50.12780">
    <property type="entry name" value="N-terminal domain of ligase-like"/>
    <property type="match status" value="2"/>
</dbReference>
<dbReference type="Gene3D" id="3.40.50.720">
    <property type="entry name" value="NAD(P)-binding Rossmann-like Domain"/>
    <property type="match status" value="1"/>
</dbReference>
<dbReference type="Gene3D" id="3.30.559.30">
    <property type="entry name" value="Nonribosomal peptide synthetase, condensation domain"/>
    <property type="match status" value="2"/>
</dbReference>
<dbReference type="Gene3D" id="3.40.50.150">
    <property type="entry name" value="Vaccinia Virus protein VP39"/>
    <property type="match status" value="1"/>
</dbReference>
<dbReference type="InterPro" id="IPR010071">
    <property type="entry name" value="AA_adenyl_dom"/>
</dbReference>
<dbReference type="InterPro" id="IPR036736">
    <property type="entry name" value="ACP-like_sf"/>
</dbReference>
<dbReference type="InterPro" id="IPR045851">
    <property type="entry name" value="AMP-bd_C_sf"/>
</dbReference>
<dbReference type="InterPro" id="IPR000873">
    <property type="entry name" value="AMP-dep_synth/lig_dom"/>
</dbReference>
<dbReference type="InterPro" id="IPR042099">
    <property type="entry name" value="ANL_N_sf"/>
</dbReference>
<dbReference type="InterPro" id="IPR023213">
    <property type="entry name" value="CAT-like_dom_sf"/>
</dbReference>
<dbReference type="InterPro" id="IPR001242">
    <property type="entry name" value="Condensatn"/>
</dbReference>
<dbReference type="InterPro" id="IPR013120">
    <property type="entry name" value="Far_NAD-bd"/>
</dbReference>
<dbReference type="InterPro" id="IPR013217">
    <property type="entry name" value="Methyltransf_12"/>
</dbReference>
<dbReference type="InterPro" id="IPR036291">
    <property type="entry name" value="NAD(P)-bd_dom_sf"/>
</dbReference>
<dbReference type="InterPro" id="IPR020806">
    <property type="entry name" value="PKS_PP-bd"/>
</dbReference>
<dbReference type="InterPro" id="IPR009081">
    <property type="entry name" value="PP-bd_ACP"/>
</dbReference>
<dbReference type="InterPro" id="IPR006162">
    <property type="entry name" value="Ppantetheine_attach_site"/>
</dbReference>
<dbReference type="InterPro" id="IPR029063">
    <property type="entry name" value="SAM-dependent_MTases_sf"/>
</dbReference>
<dbReference type="InterPro" id="IPR010080">
    <property type="entry name" value="Thioester_reductase-like_dom"/>
</dbReference>
<dbReference type="NCBIfam" id="TIGR01733">
    <property type="entry name" value="AA-adenyl-dom"/>
    <property type="match status" value="2"/>
</dbReference>
<dbReference type="NCBIfam" id="TIGR01746">
    <property type="entry name" value="Thioester-redct"/>
    <property type="match status" value="1"/>
</dbReference>
<dbReference type="PANTHER" id="PTHR45527:SF1">
    <property type="entry name" value="FATTY ACID SYNTHASE"/>
    <property type="match status" value="1"/>
</dbReference>
<dbReference type="PANTHER" id="PTHR45527">
    <property type="entry name" value="NONRIBOSOMAL PEPTIDE SYNTHETASE"/>
    <property type="match status" value="1"/>
</dbReference>
<dbReference type="Pfam" id="PF00501">
    <property type="entry name" value="AMP-binding"/>
    <property type="match status" value="2"/>
</dbReference>
<dbReference type="Pfam" id="PF00668">
    <property type="entry name" value="Condensation"/>
    <property type="match status" value="1"/>
</dbReference>
<dbReference type="Pfam" id="PF08242">
    <property type="entry name" value="Methyltransf_12"/>
    <property type="match status" value="1"/>
</dbReference>
<dbReference type="Pfam" id="PF07993">
    <property type="entry name" value="NAD_binding_4"/>
    <property type="match status" value="1"/>
</dbReference>
<dbReference type="Pfam" id="PF00550">
    <property type="entry name" value="PP-binding"/>
    <property type="match status" value="2"/>
</dbReference>
<dbReference type="SMART" id="SM00823">
    <property type="entry name" value="PKS_PP"/>
    <property type="match status" value="2"/>
</dbReference>
<dbReference type="SUPFAM" id="SSF56801">
    <property type="entry name" value="Acetyl-CoA synthetase-like"/>
    <property type="match status" value="2"/>
</dbReference>
<dbReference type="SUPFAM" id="SSF47336">
    <property type="entry name" value="ACP-like"/>
    <property type="match status" value="2"/>
</dbReference>
<dbReference type="SUPFAM" id="SSF52777">
    <property type="entry name" value="CoA-dependent acyltransferases"/>
    <property type="match status" value="3"/>
</dbReference>
<dbReference type="SUPFAM" id="SSF51735">
    <property type="entry name" value="NAD(P)-binding Rossmann-fold domains"/>
    <property type="match status" value="1"/>
</dbReference>
<dbReference type="SUPFAM" id="SSF53335">
    <property type="entry name" value="S-adenosyl-L-methionine-dependent methyltransferases"/>
    <property type="match status" value="1"/>
</dbReference>
<dbReference type="PROSITE" id="PS50075">
    <property type="entry name" value="CARRIER"/>
    <property type="match status" value="2"/>
</dbReference>
<dbReference type="PROSITE" id="PS00012">
    <property type="entry name" value="PHOSPHOPANTETHEINE"/>
    <property type="match status" value="2"/>
</dbReference>
<keyword id="KW-0436">Ligase</keyword>
<keyword id="KW-0489">Methyltransferase</keyword>
<keyword id="KW-0511">Multifunctional enzyme</keyword>
<keyword id="KW-0596">Phosphopantetheine</keyword>
<keyword id="KW-0597">Phosphoprotein</keyword>
<keyword id="KW-0808">Transferase</keyword>
<organism>
    <name type="scientific">Metarhizium majus (strain ARSEF 297)</name>
    <dbReference type="NCBI Taxonomy" id="1276143"/>
    <lineage>
        <taxon>Eukaryota</taxon>
        <taxon>Fungi</taxon>
        <taxon>Dikarya</taxon>
        <taxon>Ascomycota</taxon>
        <taxon>Pezizomycotina</taxon>
        <taxon>Sordariomycetes</taxon>
        <taxon>Hypocreomycetidae</taxon>
        <taxon>Hypocreales</taxon>
        <taxon>Clavicipitaceae</taxon>
        <taxon>Metarhizium</taxon>
        <taxon>Metarhizium majus</taxon>
    </lineage>
</organism>
<gene>
    <name evidence="7" type="primary">ppzA</name>
    <name evidence="7" type="synonym">perA</name>
</gene>
<reference key="1">
    <citation type="journal article" date="2019" name="Environ. Microbiol.">
        <title>Orthologous peramine and pyrrolopyrazine-producing biosynthetic gene clusters in Metarhizium rileyi, Metarhizium majus and Cladonia grayi.</title>
        <authorList>
            <person name="Berry D."/>
            <person name="Mace W."/>
            <person name="Rehner S.A."/>
            <person name="Grage K."/>
            <person name="Dijkwel P.P."/>
            <person name="Young C.A."/>
            <person name="Scott B."/>
        </authorList>
    </citation>
    <scope>NUCLEOTIDE SEQUENCE [GENOMIC DNA]</scope>
    <scope>FUNCTION</scope>
    <scope>PATHWAY</scope>
    <source>
        <strain>ARSEF 297</strain>
    </source>
</reference>
<reference key="2">
    <citation type="journal article" date="2024" name="J. Am. Chem. Soc.">
        <title>Two Iron(II), alpha-Ketoglutarate-Dependent Enzymes Encoded by the PPZ Gene Cluster of Metarhizium majus Enable Production of 8-Hydroxyperamine.</title>
        <authorList>
            <person name="Rothchild K.W."/>
            <person name="Hagar M."/>
            <person name="Berry D."/>
            <person name="Ryan K.S."/>
        </authorList>
    </citation>
    <scope>FUNCTION</scope>
    <scope>PATHWAY</scope>
</reference>
<feature type="chain" id="PRO_0000461609" description="Peramine synthetase ppzA">
    <location>
        <begin position="1"/>
        <end position="2799"/>
    </location>
</feature>
<feature type="domain" description="Carrier 1" evidence="4">
    <location>
        <begin position="799"/>
        <end position="875"/>
    </location>
</feature>
<feature type="domain" description="Carrier 2" evidence="4">
    <location>
        <begin position="2290"/>
        <end position="2368"/>
    </location>
</feature>
<feature type="region of interest" description="Adenylation 1" evidence="3 9">
    <location>
        <begin position="270"/>
        <end position="666"/>
    </location>
</feature>
<feature type="region of interest" description="Condensation" evidence="3 9">
    <location>
        <begin position="914"/>
        <end position="1327"/>
    </location>
</feature>
<feature type="region of interest" description="Adenylation 2" evidence="3 9">
    <location>
        <begin position="1350"/>
        <end position="1743"/>
    </location>
</feature>
<feature type="region of interest" description="Methylation (Met) domain" evidence="3 9">
    <location>
        <begin position="1874"/>
        <end position="1970"/>
    </location>
</feature>
<feature type="region of interest" description="Thiesterase (TE) domain" evidence="3 9">
    <location>
        <begin position="2420"/>
        <end position="2737"/>
    </location>
</feature>
<feature type="modified residue" description="O-(pantetheine 4'-phosphoryl)serine" evidence="4">
    <location>
        <position position="836"/>
    </location>
</feature>
<feature type="modified residue" description="O-(pantetheine 4'-phosphoryl)serine" evidence="4">
    <location>
        <position position="2327"/>
    </location>
</feature>
<evidence type="ECO:0000250" key="1">
    <source>
        <dbReference type="UniProtKB" id="A0A166YZW0"/>
    </source>
</evidence>
<evidence type="ECO:0000250" key="2">
    <source>
        <dbReference type="UniProtKB" id="Q4H424"/>
    </source>
</evidence>
<evidence type="ECO:0000255" key="3"/>
<evidence type="ECO:0000255" key="4">
    <source>
        <dbReference type="PROSITE-ProRule" id="PRU00258"/>
    </source>
</evidence>
<evidence type="ECO:0000269" key="5">
    <source>
    </source>
</evidence>
<evidence type="ECO:0000269" key="6">
    <source>
    </source>
</evidence>
<evidence type="ECO:0000303" key="7">
    <source>
    </source>
</evidence>
<evidence type="ECO:0000305" key="8"/>
<evidence type="ECO:0000305" key="9">
    <source>
    </source>
</evidence>
<comment type="function">
    <text evidence="2 5 6">Nonribosomal peptide synthetase; part of the gene cluster that mediates the biosynthesis of pyrrolopyrazines, secondary metabolites showing insecticidal activity (PubMed:30452111, PubMed:38578094). The single multifunctional NRPS ppzA is responsible for the biosynthesis of peramine (PubMed:30452111). The condensation domain of ppzA is proposed to catalyze formation of a peptide bond between 1-pyrroline-5-carboxylate and arginine. The methylation domain of ppzA would catalyze the N-methylation of the alpha-amino group of arginine. The reductase domain is proposed to be responsible for reduction of the thioester and the cyclization to form an iminium ion resulting in release from the peptide synthetase. Deprotonation of this intermediate and oxidation of the pyrroline ring would give rise to peramine. This final oxidation to give the pyrrole functionality may be spontaneous (By similarity). In Epichloe species that produce only peramine, the peramine synthetase gene is not localized in a gene cluster, in contrast to Metarhizium species that contain additional pyrrolopyrazine biosynthesis genes. The 2-oxoglutarate-Fe(II) type oxidoreductase ppzC hydroxylates peramine to yield the newly identified compound 8-hydroxyperamine whereas ppzD converts L-proline into trans-4-hydroxy-L-proline, a precursor of peramine biosynthesis (PubMed:38578094).</text>
</comment>
<comment type="catalytic activity">
    <reaction evidence="1">
        <text>(S)-1-pyrroline-5-carboxylate + L-arginine + S-adenosyl-L-methionine + 2 ATP = peramine + 2 AMP + S-adenosyl-L-homocysteine + 2 diphosphate + H2O + 2 H(+)</text>
        <dbReference type="Rhea" id="RHEA:82151"/>
        <dbReference type="ChEBI" id="CHEBI:15377"/>
        <dbReference type="ChEBI" id="CHEBI:15378"/>
        <dbReference type="ChEBI" id="CHEBI:17388"/>
        <dbReference type="ChEBI" id="CHEBI:30616"/>
        <dbReference type="ChEBI" id="CHEBI:32682"/>
        <dbReference type="ChEBI" id="CHEBI:33019"/>
        <dbReference type="ChEBI" id="CHEBI:57856"/>
        <dbReference type="ChEBI" id="CHEBI:59789"/>
        <dbReference type="ChEBI" id="CHEBI:232088"/>
        <dbReference type="ChEBI" id="CHEBI:456215"/>
    </reaction>
    <physiologicalReaction direction="left-to-right" evidence="1">
        <dbReference type="Rhea" id="RHEA:82152"/>
    </physiologicalReaction>
</comment>
<comment type="cofactor">
    <cofactor evidence="4">
        <name>pantetheine 4'-phosphate</name>
        <dbReference type="ChEBI" id="CHEBI:47942"/>
    </cofactor>
</comment>
<comment type="pathway">
    <text evidence="5">Secondary metabolite biosynthesis.</text>
</comment>
<comment type="domain">
    <text evidence="9">NRP synthetases are composed of discrete domains (adenylation (A), thiolation (T) or peptidyl carrier protein (PCP) and condensation (C) domains) which when grouped together are referred to as a single module. Each module is responsible for the recognition (via the A domain) and incorporation of a single amino acid into the growing peptide product. Thus, an NRP synthetase is generally composed of one or more modules and can terminate in a thioesterase domain (TE) that releases the newly synthesized peptide from the enzyme. Occasionally, methyltransferase domains (responsible for amino acid methylation) are present within the NRP synthetase. PpzA has the following architecture: A-T-C-A-Met-T-TE.</text>
</comment>
<comment type="similarity">
    <text evidence="8">Belongs to the NRP synthetase family.</text>
</comment>